<proteinExistence type="inferred from homology"/>
<gene>
    <name evidence="1" type="primary">rplT</name>
    <name type="ordered locus">pc0704</name>
</gene>
<name>RL20_PARUW</name>
<evidence type="ECO:0000255" key="1">
    <source>
        <dbReference type="HAMAP-Rule" id="MF_00382"/>
    </source>
</evidence>
<evidence type="ECO:0000305" key="2"/>
<accession>Q6MDC1</accession>
<protein>
    <recommendedName>
        <fullName evidence="1">Large ribosomal subunit protein bL20</fullName>
    </recommendedName>
    <alternativeName>
        <fullName evidence="2">50S ribosomal protein L20</fullName>
    </alternativeName>
</protein>
<reference key="1">
    <citation type="journal article" date="2004" name="Science">
        <title>Illuminating the evolutionary history of chlamydiae.</title>
        <authorList>
            <person name="Horn M."/>
            <person name="Collingro A."/>
            <person name="Schmitz-Esser S."/>
            <person name="Beier C.L."/>
            <person name="Purkhold U."/>
            <person name="Fartmann B."/>
            <person name="Brandt P."/>
            <person name="Nyakatura G.J."/>
            <person name="Droege M."/>
            <person name="Frishman D."/>
            <person name="Rattei T."/>
            <person name="Mewes H.-W."/>
            <person name="Wagner M."/>
        </authorList>
    </citation>
    <scope>NUCLEOTIDE SEQUENCE [LARGE SCALE GENOMIC DNA]</scope>
    <source>
        <strain>UWE25</strain>
    </source>
</reference>
<dbReference type="EMBL" id="BX908798">
    <property type="protein sequence ID" value="CAF23428.1"/>
    <property type="molecule type" value="Genomic_DNA"/>
</dbReference>
<dbReference type="RefSeq" id="WP_011175254.1">
    <property type="nucleotide sequence ID" value="NC_005861.2"/>
</dbReference>
<dbReference type="SMR" id="Q6MDC1"/>
<dbReference type="STRING" id="264201.pc0704"/>
<dbReference type="KEGG" id="pcu:PC_RS03385"/>
<dbReference type="eggNOG" id="COG0292">
    <property type="taxonomic scope" value="Bacteria"/>
</dbReference>
<dbReference type="HOGENOM" id="CLU_123265_0_1_0"/>
<dbReference type="OrthoDB" id="9808966at2"/>
<dbReference type="Proteomes" id="UP000000529">
    <property type="component" value="Chromosome"/>
</dbReference>
<dbReference type="GO" id="GO:1990904">
    <property type="term" value="C:ribonucleoprotein complex"/>
    <property type="evidence" value="ECO:0007669"/>
    <property type="project" value="UniProtKB-KW"/>
</dbReference>
<dbReference type="GO" id="GO:0005840">
    <property type="term" value="C:ribosome"/>
    <property type="evidence" value="ECO:0007669"/>
    <property type="project" value="UniProtKB-KW"/>
</dbReference>
<dbReference type="GO" id="GO:0019843">
    <property type="term" value="F:rRNA binding"/>
    <property type="evidence" value="ECO:0007669"/>
    <property type="project" value="UniProtKB-UniRule"/>
</dbReference>
<dbReference type="GO" id="GO:0003735">
    <property type="term" value="F:structural constituent of ribosome"/>
    <property type="evidence" value="ECO:0007669"/>
    <property type="project" value="InterPro"/>
</dbReference>
<dbReference type="GO" id="GO:0000027">
    <property type="term" value="P:ribosomal large subunit assembly"/>
    <property type="evidence" value="ECO:0007669"/>
    <property type="project" value="UniProtKB-UniRule"/>
</dbReference>
<dbReference type="GO" id="GO:0006412">
    <property type="term" value="P:translation"/>
    <property type="evidence" value="ECO:0007669"/>
    <property type="project" value="InterPro"/>
</dbReference>
<dbReference type="CDD" id="cd07026">
    <property type="entry name" value="Ribosomal_L20"/>
    <property type="match status" value="1"/>
</dbReference>
<dbReference type="FunFam" id="1.10.1900.20:FF:000001">
    <property type="entry name" value="50S ribosomal protein L20"/>
    <property type="match status" value="1"/>
</dbReference>
<dbReference type="Gene3D" id="6.10.160.10">
    <property type="match status" value="1"/>
</dbReference>
<dbReference type="Gene3D" id="1.10.1900.20">
    <property type="entry name" value="Ribosomal protein L20"/>
    <property type="match status" value="1"/>
</dbReference>
<dbReference type="HAMAP" id="MF_00382">
    <property type="entry name" value="Ribosomal_bL20"/>
    <property type="match status" value="1"/>
</dbReference>
<dbReference type="InterPro" id="IPR005813">
    <property type="entry name" value="Ribosomal_bL20"/>
</dbReference>
<dbReference type="InterPro" id="IPR049946">
    <property type="entry name" value="RIBOSOMAL_L20_CS"/>
</dbReference>
<dbReference type="InterPro" id="IPR035566">
    <property type="entry name" value="Ribosomal_protein_bL20_C"/>
</dbReference>
<dbReference type="NCBIfam" id="TIGR01032">
    <property type="entry name" value="rplT_bact"/>
    <property type="match status" value="1"/>
</dbReference>
<dbReference type="PANTHER" id="PTHR10986">
    <property type="entry name" value="39S RIBOSOMAL PROTEIN L20"/>
    <property type="match status" value="1"/>
</dbReference>
<dbReference type="Pfam" id="PF00453">
    <property type="entry name" value="Ribosomal_L20"/>
    <property type="match status" value="1"/>
</dbReference>
<dbReference type="PRINTS" id="PR00062">
    <property type="entry name" value="RIBOSOMALL20"/>
</dbReference>
<dbReference type="SUPFAM" id="SSF74731">
    <property type="entry name" value="Ribosomal protein L20"/>
    <property type="match status" value="1"/>
</dbReference>
<dbReference type="PROSITE" id="PS00937">
    <property type="entry name" value="RIBOSOMAL_L20"/>
    <property type="match status" value="1"/>
</dbReference>
<comment type="function">
    <text evidence="1">Binds directly to 23S ribosomal RNA and is necessary for the in vitro assembly process of the 50S ribosomal subunit. It is not involved in the protein synthesizing functions of that subunit.</text>
</comment>
<comment type="similarity">
    <text evidence="1">Belongs to the bacterial ribosomal protein bL20 family.</text>
</comment>
<feature type="chain" id="PRO_0000177197" description="Large ribosomal subunit protein bL20">
    <location>
        <begin position="1"/>
        <end position="118"/>
    </location>
</feature>
<organism>
    <name type="scientific">Protochlamydia amoebophila (strain UWE25)</name>
    <dbReference type="NCBI Taxonomy" id="264201"/>
    <lineage>
        <taxon>Bacteria</taxon>
        <taxon>Pseudomonadati</taxon>
        <taxon>Chlamydiota</taxon>
        <taxon>Chlamydiia</taxon>
        <taxon>Parachlamydiales</taxon>
        <taxon>Parachlamydiaceae</taxon>
        <taxon>Candidatus Protochlamydia</taxon>
    </lineage>
</organism>
<sequence>MVRATNAVASHRRKKRLFKLAKGFVGDRKNHLRLTSGAVMRAMAYNYAHRKQKKRDFRSLWIMRLNAAARINGISYSKFIYGLKKAQCELDRKVLADMAIRDPGSFAAIVGFAKEALA</sequence>
<keyword id="KW-1185">Reference proteome</keyword>
<keyword id="KW-0687">Ribonucleoprotein</keyword>
<keyword id="KW-0689">Ribosomal protein</keyword>
<keyword id="KW-0694">RNA-binding</keyword>
<keyword id="KW-0699">rRNA-binding</keyword>